<name>MGSA_PECAS</name>
<proteinExistence type="inferred from homology"/>
<comment type="function">
    <text evidence="1">Catalyzes the formation of methylglyoxal from dihydroxyacetone phosphate.</text>
</comment>
<comment type="catalytic activity">
    <reaction evidence="1">
        <text>dihydroxyacetone phosphate = methylglyoxal + phosphate</text>
        <dbReference type="Rhea" id="RHEA:17937"/>
        <dbReference type="ChEBI" id="CHEBI:17158"/>
        <dbReference type="ChEBI" id="CHEBI:43474"/>
        <dbReference type="ChEBI" id="CHEBI:57642"/>
        <dbReference type="EC" id="4.2.3.3"/>
    </reaction>
</comment>
<comment type="similarity">
    <text evidence="1">Belongs to the methylglyoxal synthase family.</text>
</comment>
<protein>
    <recommendedName>
        <fullName evidence="1">Methylglyoxal synthase</fullName>
        <shortName evidence="1">MGS</shortName>
        <ecNumber evidence="1">4.2.3.3</ecNumber>
    </recommendedName>
</protein>
<sequence length="152" mass="16878">MEFTTRTIPAQKHIALVAHDHCKQSLLDWVGTNKQQLTEHTLYATGTTGNLIQSNTGLPVKSMLSGPMGGDQQVGALISEGKIDLMIFFWDPLNAVPHDPDVKALLRLATVWNIPVATNRATADFLINSALFKEPVQIAIPDYQRYLQDRLK</sequence>
<evidence type="ECO:0000255" key="1">
    <source>
        <dbReference type="HAMAP-Rule" id="MF_00549"/>
    </source>
</evidence>
<dbReference type="EC" id="4.2.3.3" evidence="1"/>
<dbReference type="EMBL" id="BX950851">
    <property type="protein sequence ID" value="CAG74662.1"/>
    <property type="molecule type" value="Genomic_DNA"/>
</dbReference>
<dbReference type="RefSeq" id="WP_011093333.1">
    <property type="nucleotide sequence ID" value="NC_004547.2"/>
</dbReference>
<dbReference type="SMR" id="Q6D6C8"/>
<dbReference type="STRING" id="218491.ECA1757"/>
<dbReference type="KEGG" id="eca:ECA1757"/>
<dbReference type="PATRIC" id="fig|218491.5.peg.1784"/>
<dbReference type="eggNOG" id="COG1803">
    <property type="taxonomic scope" value="Bacteria"/>
</dbReference>
<dbReference type="HOGENOM" id="CLU_120420_0_1_6"/>
<dbReference type="OrthoDB" id="9787147at2"/>
<dbReference type="Proteomes" id="UP000007966">
    <property type="component" value="Chromosome"/>
</dbReference>
<dbReference type="GO" id="GO:0005829">
    <property type="term" value="C:cytosol"/>
    <property type="evidence" value="ECO:0007669"/>
    <property type="project" value="TreeGrafter"/>
</dbReference>
<dbReference type="GO" id="GO:0008929">
    <property type="term" value="F:methylglyoxal synthase activity"/>
    <property type="evidence" value="ECO:0007669"/>
    <property type="project" value="UniProtKB-UniRule"/>
</dbReference>
<dbReference type="GO" id="GO:0019242">
    <property type="term" value="P:methylglyoxal biosynthetic process"/>
    <property type="evidence" value="ECO:0007669"/>
    <property type="project" value="UniProtKB-UniRule"/>
</dbReference>
<dbReference type="CDD" id="cd01422">
    <property type="entry name" value="MGS"/>
    <property type="match status" value="1"/>
</dbReference>
<dbReference type="FunFam" id="3.40.50.1380:FF:000002">
    <property type="entry name" value="Methylglyoxal synthase"/>
    <property type="match status" value="1"/>
</dbReference>
<dbReference type="Gene3D" id="3.40.50.1380">
    <property type="entry name" value="Methylglyoxal synthase-like domain"/>
    <property type="match status" value="1"/>
</dbReference>
<dbReference type="HAMAP" id="MF_00549">
    <property type="entry name" value="Methylglyoxal_synth"/>
    <property type="match status" value="1"/>
</dbReference>
<dbReference type="InterPro" id="IPR004363">
    <property type="entry name" value="Methylgl_synth"/>
</dbReference>
<dbReference type="InterPro" id="IPR018148">
    <property type="entry name" value="Methylglyoxal_synth_AS"/>
</dbReference>
<dbReference type="InterPro" id="IPR011607">
    <property type="entry name" value="MGS-like_dom"/>
</dbReference>
<dbReference type="InterPro" id="IPR036914">
    <property type="entry name" value="MGS-like_dom_sf"/>
</dbReference>
<dbReference type="NCBIfam" id="TIGR00160">
    <property type="entry name" value="MGSA"/>
    <property type="match status" value="1"/>
</dbReference>
<dbReference type="NCBIfam" id="NF003559">
    <property type="entry name" value="PRK05234.1"/>
    <property type="match status" value="1"/>
</dbReference>
<dbReference type="PANTHER" id="PTHR30492">
    <property type="entry name" value="METHYLGLYOXAL SYNTHASE"/>
    <property type="match status" value="1"/>
</dbReference>
<dbReference type="PANTHER" id="PTHR30492:SF0">
    <property type="entry name" value="METHYLGLYOXAL SYNTHASE"/>
    <property type="match status" value="1"/>
</dbReference>
<dbReference type="Pfam" id="PF02142">
    <property type="entry name" value="MGS"/>
    <property type="match status" value="1"/>
</dbReference>
<dbReference type="PIRSF" id="PIRSF006614">
    <property type="entry name" value="Methylglyox_syn"/>
    <property type="match status" value="1"/>
</dbReference>
<dbReference type="SMART" id="SM00851">
    <property type="entry name" value="MGS"/>
    <property type="match status" value="1"/>
</dbReference>
<dbReference type="SUPFAM" id="SSF52335">
    <property type="entry name" value="Methylglyoxal synthase-like"/>
    <property type="match status" value="1"/>
</dbReference>
<dbReference type="PROSITE" id="PS01335">
    <property type="entry name" value="METHYLGLYOXAL_SYNTH"/>
    <property type="match status" value="1"/>
</dbReference>
<dbReference type="PROSITE" id="PS51855">
    <property type="entry name" value="MGS"/>
    <property type="match status" value="1"/>
</dbReference>
<feature type="chain" id="PRO_0000178629" description="Methylglyoxal synthase">
    <location>
        <begin position="1"/>
        <end position="152"/>
    </location>
</feature>
<feature type="domain" description="MGS-like" evidence="1">
    <location>
        <begin position="6"/>
        <end position="152"/>
    </location>
</feature>
<feature type="active site" description="Proton donor/acceptor" evidence="1">
    <location>
        <position position="71"/>
    </location>
</feature>
<feature type="binding site" evidence="1">
    <location>
        <position position="19"/>
    </location>
    <ligand>
        <name>substrate</name>
    </ligand>
</feature>
<feature type="binding site" evidence="1">
    <location>
        <position position="23"/>
    </location>
    <ligand>
        <name>substrate</name>
    </ligand>
</feature>
<feature type="binding site" evidence="1">
    <location>
        <begin position="45"/>
        <end position="48"/>
    </location>
    <ligand>
        <name>substrate</name>
    </ligand>
</feature>
<feature type="binding site" evidence="1">
    <location>
        <begin position="65"/>
        <end position="66"/>
    </location>
    <ligand>
        <name>substrate</name>
    </ligand>
</feature>
<feature type="binding site" evidence="1">
    <location>
        <position position="98"/>
    </location>
    <ligand>
        <name>substrate</name>
    </ligand>
</feature>
<reference key="1">
    <citation type="journal article" date="2004" name="Proc. Natl. Acad. Sci. U.S.A.">
        <title>Genome sequence of the enterobacterial phytopathogen Erwinia carotovora subsp. atroseptica and characterization of virulence factors.</title>
        <authorList>
            <person name="Bell K.S."/>
            <person name="Sebaihia M."/>
            <person name="Pritchard L."/>
            <person name="Holden M.T.G."/>
            <person name="Hyman L.J."/>
            <person name="Holeva M.C."/>
            <person name="Thomson N.R."/>
            <person name="Bentley S.D."/>
            <person name="Churcher L.J.C."/>
            <person name="Mungall K."/>
            <person name="Atkin R."/>
            <person name="Bason N."/>
            <person name="Brooks K."/>
            <person name="Chillingworth T."/>
            <person name="Clark K."/>
            <person name="Doggett J."/>
            <person name="Fraser A."/>
            <person name="Hance Z."/>
            <person name="Hauser H."/>
            <person name="Jagels K."/>
            <person name="Moule S."/>
            <person name="Norbertczak H."/>
            <person name="Ormond D."/>
            <person name="Price C."/>
            <person name="Quail M.A."/>
            <person name="Sanders M."/>
            <person name="Walker D."/>
            <person name="Whitehead S."/>
            <person name="Salmond G.P.C."/>
            <person name="Birch P.R.J."/>
            <person name="Parkhill J."/>
            <person name="Toth I.K."/>
        </authorList>
    </citation>
    <scope>NUCLEOTIDE SEQUENCE [LARGE SCALE GENOMIC DNA]</scope>
    <source>
        <strain>SCRI 1043 / ATCC BAA-672</strain>
    </source>
</reference>
<accession>Q6D6C8</accession>
<gene>
    <name evidence="1" type="primary">mgsA</name>
    <name type="ordered locus">ECA1757</name>
</gene>
<keyword id="KW-0456">Lyase</keyword>
<keyword id="KW-1185">Reference proteome</keyword>
<organism>
    <name type="scientific">Pectobacterium atrosepticum (strain SCRI 1043 / ATCC BAA-672)</name>
    <name type="common">Erwinia carotovora subsp. atroseptica</name>
    <dbReference type="NCBI Taxonomy" id="218491"/>
    <lineage>
        <taxon>Bacteria</taxon>
        <taxon>Pseudomonadati</taxon>
        <taxon>Pseudomonadota</taxon>
        <taxon>Gammaproteobacteria</taxon>
        <taxon>Enterobacterales</taxon>
        <taxon>Pectobacteriaceae</taxon>
        <taxon>Pectobacterium</taxon>
    </lineage>
</organism>